<gene>
    <name type="primary">Fgf14</name>
    <name type="synonym">Fhf4</name>
</gene>
<name>FGF14_MOUSE</name>
<protein>
    <recommendedName>
        <fullName>Fibroblast growth factor 14</fullName>
        <shortName>FGF-14</shortName>
    </recommendedName>
    <alternativeName>
        <fullName>Fibroblast growth factor homologous factor 4</fullName>
        <shortName>FHF-4</shortName>
    </alternativeName>
</protein>
<dbReference type="EMBL" id="U66204">
    <property type="protein sequence ID" value="AAB18920.1"/>
    <property type="molecule type" value="mRNA"/>
</dbReference>
<dbReference type="EMBL" id="AB029498">
    <property type="protein sequence ID" value="BAA89483.1"/>
    <property type="molecule type" value="mRNA"/>
</dbReference>
<dbReference type="EMBL" id="AK030616">
    <property type="protein sequence ID" value="BAC27049.1"/>
    <property type="molecule type" value="mRNA"/>
</dbReference>
<dbReference type="EMBL" id="BC107003">
    <property type="protein sequence ID" value="AAI07004.1"/>
    <property type="molecule type" value="mRNA"/>
</dbReference>
<dbReference type="RefSeq" id="NP_034331.2">
    <property type="nucleotide sequence ID" value="NM_010201.4"/>
</dbReference>
<dbReference type="RefSeq" id="XP_011243254.1">
    <molecule id="P70379-2"/>
    <property type="nucleotide sequence ID" value="XM_011244952.4"/>
</dbReference>
<dbReference type="SMR" id="P70379"/>
<dbReference type="FunCoup" id="P70379">
    <property type="interactions" value="1775"/>
</dbReference>
<dbReference type="IntAct" id="P70379">
    <property type="interactions" value="2"/>
</dbReference>
<dbReference type="STRING" id="10090.ENSMUSP00000093185"/>
<dbReference type="iPTMnet" id="P70379"/>
<dbReference type="PhosphoSitePlus" id="P70379"/>
<dbReference type="PaxDb" id="10090-ENSMUSP00000093185"/>
<dbReference type="ProteomicsDB" id="271572">
    <molecule id="P70379-1"/>
</dbReference>
<dbReference type="ProteomicsDB" id="271573">
    <molecule id="P70379-2"/>
</dbReference>
<dbReference type="ABCD" id="P70379">
    <property type="antibodies" value="1 sequenced antibody"/>
</dbReference>
<dbReference type="DNASU" id="14169"/>
<dbReference type="GeneID" id="14169"/>
<dbReference type="KEGG" id="mmu:14169"/>
<dbReference type="UCSC" id="uc007vbv.2">
    <molecule id="P70379-1"/>
    <property type="organism name" value="mouse"/>
</dbReference>
<dbReference type="AGR" id="MGI:109189"/>
<dbReference type="CTD" id="2259"/>
<dbReference type="MGI" id="MGI:109189">
    <property type="gene designation" value="Fgf14"/>
</dbReference>
<dbReference type="eggNOG" id="KOG3885">
    <property type="taxonomic scope" value="Eukaryota"/>
</dbReference>
<dbReference type="InParanoid" id="P70379"/>
<dbReference type="OrthoDB" id="6158176at2759"/>
<dbReference type="BioGRID-ORCS" id="14169">
    <property type="hits" value="1 hit in 77 CRISPR screens"/>
</dbReference>
<dbReference type="ChiTaRS" id="Fgf14">
    <property type="organism name" value="mouse"/>
</dbReference>
<dbReference type="PRO" id="PR:P70379"/>
<dbReference type="Proteomes" id="UP000000589">
    <property type="component" value="Unplaced"/>
</dbReference>
<dbReference type="RNAct" id="P70379">
    <property type="molecule type" value="protein"/>
</dbReference>
<dbReference type="GO" id="GO:0005829">
    <property type="term" value="C:cytosol"/>
    <property type="evidence" value="ECO:0000314"/>
    <property type="project" value="MGI"/>
</dbReference>
<dbReference type="GO" id="GO:0005634">
    <property type="term" value="C:nucleus"/>
    <property type="evidence" value="ECO:0000314"/>
    <property type="project" value="MGI"/>
</dbReference>
<dbReference type="GO" id="GO:0045202">
    <property type="term" value="C:synapse"/>
    <property type="evidence" value="ECO:0007669"/>
    <property type="project" value="GOC"/>
</dbReference>
<dbReference type="GO" id="GO:0008083">
    <property type="term" value="F:growth factor activity"/>
    <property type="evidence" value="ECO:0007669"/>
    <property type="project" value="UniProtKB-KW"/>
</dbReference>
<dbReference type="GO" id="GO:0008201">
    <property type="term" value="F:heparin binding"/>
    <property type="evidence" value="ECO:0000266"/>
    <property type="project" value="MGI"/>
</dbReference>
<dbReference type="GO" id="GO:0008344">
    <property type="term" value="P:adult locomotory behavior"/>
    <property type="evidence" value="ECO:0000316"/>
    <property type="project" value="MGI"/>
</dbReference>
<dbReference type="GO" id="GO:0007268">
    <property type="term" value="P:chemical synaptic transmission"/>
    <property type="evidence" value="ECO:0000316"/>
    <property type="project" value="MGI"/>
</dbReference>
<dbReference type="GO" id="GO:0007254">
    <property type="term" value="P:JNK cascade"/>
    <property type="evidence" value="ECO:0000266"/>
    <property type="project" value="MGI"/>
</dbReference>
<dbReference type="GO" id="GO:0050905">
    <property type="term" value="P:neuromuscular process"/>
    <property type="evidence" value="ECO:0000316"/>
    <property type="project" value="MGI"/>
</dbReference>
<dbReference type="GO" id="GO:0010765">
    <property type="term" value="P:positive regulation of sodium ion transport"/>
    <property type="evidence" value="ECO:0000316"/>
    <property type="project" value="MGI"/>
</dbReference>
<dbReference type="GO" id="GO:0060078">
    <property type="term" value="P:regulation of postsynaptic membrane potential"/>
    <property type="evidence" value="ECO:0000266"/>
    <property type="project" value="MGI"/>
</dbReference>
<dbReference type="GO" id="GO:0048167">
    <property type="term" value="P:regulation of synaptic plasticity"/>
    <property type="evidence" value="ECO:0000266"/>
    <property type="project" value="MGI"/>
</dbReference>
<dbReference type="GO" id="GO:1903421">
    <property type="term" value="P:regulation of synaptic vesicle recycling"/>
    <property type="evidence" value="ECO:0000266"/>
    <property type="project" value="MGI"/>
</dbReference>
<dbReference type="CDD" id="cd23330">
    <property type="entry name" value="beta-trefoil_FGF14"/>
    <property type="match status" value="1"/>
</dbReference>
<dbReference type="FunFam" id="2.80.10.50:FF:000001">
    <property type="entry name" value="Fibroblast growth factor"/>
    <property type="match status" value="1"/>
</dbReference>
<dbReference type="Gene3D" id="2.80.10.50">
    <property type="match status" value="1"/>
</dbReference>
<dbReference type="InterPro" id="IPR002209">
    <property type="entry name" value="Fibroblast_GF_fam"/>
</dbReference>
<dbReference type="InterPro" id="IPR008996">
    <property type="entry name" value="IL1/FGF"/>
</dbReference>
<dbReference type="PANTHER" id="PTHR11486">
    <property type="entry name" value="FIBROBLAST GROWTH FACTOR"/>
    <property type="match status" value="1"/>
</dbReference>
<dbReference type="Pfam" id="PF00167">
    <property type="entry name" value="FGF"/>
    <property type="match status" value="1"/>
</dbReference>
<dbReference type="PRINTS" id="PR00263">
    <property type="entry name" value="HBGFFGF"/>
</dbReference>
<dbReference type="PRINTS" id="PR00262">
    <property type="entry name" value="IL1HBGF"/>
</dbReference>
<dbReference type="SMART" id="SM00442">
    <property type="entry name" value="FGF"/>
    <property type="match status" value="1"/>
</dbReference>
<dbReference type="SUPFAM" id="SSF50353">
    <property type="entry name" value="Cytokine"/>
    <property type="match status" value="1"/>
</dbReference>
<dbReference type="PROSITE" id="PS00247">
    <property type="entry name" value="HBGF_FGF"/>
    <property type="match status" value="1"/>
</dbReference>
<accession>P70379</accession>
<accession>Q3KNZ6</accession>
<accession>Q8BST0</accession>
<accession>Q9JHL9</accession>
<comment type="function">
    <text>Probably involved in nervous system development and function.</text>
</comment>
<comment type="subunit">
    <text evidence="1">Interacts with SCN8A.</text>
</comment>
<comment type="subcellular location">
    <subcellularLocation>
        <location evidence="4">Nucleus</location>
    </subcellularLocation>
</comment>
<comment type="alternative products">
    <event type="alternative splicing"/>
    <isoform>
        <id>P70379-1</id>
        <name>1</name>
        <sequence type="displayed"/>
    </isoform>
    <isoform>
        <id>P70379-2</id>
        <name>2</name>
        <name>FGF-14C</name>
        <sequence type="described" ref="VSP_001530"/>
    </isoform>
</comment>
<comment type="tissue specificity">
    <text>Brain and testis; widely distributed in the developing nervous system. In adult, high levels in the granular layer of the cerebellum, less in hippocampus and olfactory bulb.</text>
</comment>
<comment type="similarity">
    <text evidence="4">Belongs to the heparin-binding growth factors family.</text>
</comment>
<evidence type="ECO:0000250" key="1">
    <source>
        <dbReference type="UniProtKB" id="Q92915"/>
    </source>
</evidence>
<evidence type="ECO:0000256" key="2">
    <source>
        <dbReference type="SAM" id="MobiDB-lite"/>
    </source>
</evidence>
<evidence type="ECO:0000303" key="3">
    <source>
    </source>
</evidence>
<evidence type="ECO:0000305" key="4"/>
<organism>
    <name type="scientific">Mus musculus</name>
    <name type="common">Mouse</name>
    <dbReference type="NCBI Taxonomy" id="10090"/>
    <lineage>
        <taxon>Eukaryota</taxon>
        <taxon>Metazoa</taxon>
        <taxon>Chordata</taxon>
        <taxon>Craniata</taxon>
        <taxon>Vertebrata</taxon>
        <taxon>Euteleostomi</taxon>
        <taxon>Mammalia</taxon>
        <taxon>Eutheria</taxon>
        <taxon>Euarchontoglires</taxon>
        <taxon>Glires</taxon>
        <taxon>Rodentia</taxon>
        <taxon>Myomorpha</taxon>
        <taxon>Muroidea</taxon>
        <taxon>Muridae</taxon>
        <taxon>Murinae</taxon>
        <taxon>Mus</taxon>
        <taxon>Mus</taxon>
    </lineage>
</organism>
<proteinExistence type="evidence at transcript level"/>
<reference key="1">
    <citation type="journal article" date="1996" name="Proc. Natl. Acad. Sci. U.S.A.">
        <title>Fibroblast growth factor (FGF) homologous factors: new members of the FGF family implicated in nervous system development.</title>
        <authorList>
            <person name="Smallwood P.M."/>
            <person name="Munoz-Sanjuan I."/>
            <person name="Tong P."/>
            <person name="Macke J.P."/>
            <person name="Hendry S.H."/>
            <person name="Gilbert D.J."/>
            <person name="Copeland N.G."/>
            <person name="Jenkins N.A."/>
            <person name="Nathans J."/>
        </authorList>
    </citation>
    <scope>NUCLEOTIDE SEQUENCE [MRNA]</scope>
    <source>
        <tissue>Eye</tissue>
    </source>
</reference>
<reference key="2">
    <citation type="journal article" date="2000" name="Biochim. Biophys. Acta">
        <title>Stage-specific expression of a novel isoform of mouse FGF-14 (FHF-4) in spermatocytes.</title>
        <authorList>
            <person name="Yamamoto S."/>
            <person name="Mikami T."/>
            <person name="Konishi M."/>
            <person name="Itoh N."/>
        </authorList>
    </citation>
    <scope>NUCLEOTIDE SEQUENCE [MRNA]</scope>
</reference>
<reference key="3">
    <citation type="journal article" date="2005" name="Science">
        <title>The transcriptional landscape of the mammalian genome.</title>
        <authorList>
            <person name="Carninci P."/>
            <person name="Kasukawa T."/>
            <person name="Katayama S."/>
            <person name="Gough J."/>
            <person name="Frith M.C."/>
            <person name="Maeda N."/>
            <person name="Oyama R."/>
            <person name="Ravasi T."/>
            <person name="Lenhard B."/>
            <person name="Wells C."/>
            <person name="Kodzius R."/>
            <person name="Shimokawa K."/>
            <person name="Bajic V.B."/>
            <person name="Brenner S.E."/>
            <person name="Batalov S."/>
            <person name="Forrest A.R."/>
            <person name="Zavolan M."/>
            <person name="Davis M.J."/>
            <person name="Wilming L.G."/>
            <person name="Aidinis V."/>
            <person name="Allen J.E."/>
            <person name="Ambesi-Impiombato A."/>
            <person name="Apweiler R."/>
            <person name="Aturaliya R.N."/>
            <person name="Bailey T.L."/>
            <person name="Bansal M."/>
            <person name="Baxter L."/>
            <person name="Beisel K.W."/>
            <person name="Bersano T."/>
            <person name="Bono H."/>
            <person name="Chalk A.M."/>
            <person name="Chiu K.P."/>
            <person name="Choudhary V."/>
            <person name="Christoffels A."/>
            <person name="Clutterbuck D.R."/>
            <person name="Crowe M.L."/>
            <person name="Dalla E."/>
            <person name="Dalrymple B.P."/>
            <person name="de Bono B."/>
            <person name="Della Gatta G."/>
            <person name="di Bernardo D."/>
            <person name="Down T."/>
            <person name="Engstrom P."/>
            <person name="Fagiolini M."/>
            <person name="Faulkner G."/>
            <person name="Fletcher C.F."/>
            <person name="Fukushima T."/>
            <person name="Furuno M."/>
            <person name="Futaki S."/>
            <person name="Gariboldi M."/>
            <person name="Georgii-Hemming P."/>
            <person name="Gingeras T.R."/>
            <person name="Gojobori T."/>
            <person name="Green R.E."/>
            <person name="Gustincich S."/>
            <person name="Harbers M."/>
            <person name="Hayashi Y."/>
            <person name="Hensch T.K."/>
            <person name="Hirokawa N."/>
            <person name="Hill D."/>
            <person name="Huminiecki L."/>
            <person name="Iacono M."/>
            <person name="Ikeo K."/>
            <person name="Iwama A."/>
            <person name="Ishikawa T."/>
            <person name="Jakt M."/>
            <person name="Kanapin A."/>
            <person name="Katoh M."/>
            <person name="Kawasawa Y."/>
            <person name="Kelso J."/>
            <person name="Kitamura H."/>
            <person name="Kitano H."/>
            <person name="Kollias G."/>
            <person name="Krishnan S.P."/>
            <person name="Kruger A."/>
            <person name="Kummerfeld S.K."/>
            <person name="Kurochkin I.V."/>
            <person name="Lareau L.F."/>
            <person name="Lazarevic D."/>
            <person name="Lipovich L."/>
            <person name="Liu J."/>
            <person name="Liuni S."/>
            <person name="McWilliam S."/>
            <person name="Madan Babu M."/>
            <person name="Madera M."/>
            <person name="Marchionni L."/>
            <person name="Matsuda H."/>
            <person name="Matsuzawa S."/>
            <person name="Miki H."/>
            <person name="Mignone F."/>
            <person name="Miyake S."/>
            <person name="Morris K."/>
            <person name="Mottagui-Tabar S."/>
            <person name="Mulder N."/>
            <person name="Nakano N."/>
            <person name="Nakauchi H."/>
            <person name="Ng P."/>
            <person name="Nilsson R."/>
            <person name="Nishiguchi S."/>
            <person name="Nishikawa S."/>
            <person name="Nori F."/>
            <person name="Ohara O."/>
            <person name="Okazaki Y."/>
            <person name="Orlando V."/>
            <person name="Pang K.C."/>
            <person name="Pavan W.J."/>
            <person name="Pavesi G."/>
            <person name="Pesole G."/>
            <person name="Petrovsky N."/>
            <person name="Piazza S."/>
            <person name="Reed J."/>
            <person name="Reid J.F."/>
            <person name="Ring B.Z."/>
            <person name="Ringwald M."/>
            <person name="Rost B."/>
            <person name="Ruan Y."/>
            <person name="Salzberg S.L."/>
            <person name="Sandelin A."/>
            <person name="Schneider C."/>
            <person name="Schoenbach C."/>
            <person name="Sekiguchi K."/>
            <person name="Semple C.A."/>
            <person name="Seno S."/>
            <person name="Sessa L."/>
            <person name="Sheng Y."/>
            <person name="Shibata Y."/>
            <person name="Shimada H."/>
            <person name="Shimada K."/>
            <person name="Silva D."/>
            <person name="Sinclair B."/>
            <person name="Sperling S."/>
            <person name="Stupka E."/>
            <person name="Sugiura K."/>
            <person name="Sultana R."/>
            <person name="Takenaka Y."/>
            <person name="Taki K."/>
            <person name="Tammoja K."/>
            <person name="Tan S.L."/>
            <person name="Tang S."/>
            <person name="Taylor M.S."/>
            <person name="Tegner J."/>
            <person name="Teichmann S.A."/>
            <person name="Ueda H.R."/>
            <person name="van Nimwegen E."/>
            <person name="Verardo R."/>
            <person name="Wei C.L."/>
            <person name="Yagi K."/>
            <person name="Yamanishi H."/>
            <person name="Zabarovsky E."/>
            <person name="Zhu S."/>
            <person name="Zimmer A."/>
            <person name="Hide W."/>
            <person name="Bult C."/>
            <person name="Grimmond S.M."/>
            <person name="Teasdale R.D."/>
            <person name="Liu E.T."/>
            <person name="Brusic V."/>
            <person name="Quackenbush J."/>
            <person name="Wahlestedt C."/>
            <person name="Mattick J.S."/>
            <person name="Hume D.A."/>
            <person name="Kai C."/>
            <person name="Sasaki D."/>
            <person name="Tomaru Y."/>
            <person name="Fukuda S."/>
            <person name="Kanamori-Katayama M."/>
            <person name="Suzuki M."/>
            <person name="Aoki J."/>
            <person name="Arakawa T."/>
            <person name="Iida J."/>
            <person name="Imamura K."/>
            <person name="Itoh M."/>
            <person name="Kato T."/>
            <person name="Kawaji H."/>
            <person name="Kawagashira N."/>
            <person name="Kawashima T."/>
            <person name="Kojima M."/>
            <person name="Kondo S."/>
            <person name="Konno H."/>
            <person name="Nakano K."/>
            <person name="Ninomiya N."/>
            <person name="Nishio T."/>
            <person name="Okada M."/>
            <person name="Plessy C."/>
            <person name="Shibata K."/>
            <person name="Shiraki T."/>
            <person name="Suzuki S."/>
            <person name="Tagami M."/>
            <person name="Waki K."/>
            <person name="Watahiki A."/>
            <person name="Okamura-Oho Y."/>
            <person name="Suzuki H."/>
            <person name="Kawai J."/>
            <person name="Hayashizaki Y."/>
        </authorList>
    </citation>
    <scope>NUCLEOTIDE SEQUENCE [LARGE SCALE MRNA]</scope>
    <source>
        <strain>C57BL/6J</strain>
        <tissue>Pituitary</tissue>
    </source>
</reference>
<reference key="4">
    <citation type="journal article" date="2004" name="Genome Res.">
        <title>The status, quality, and expansion of the NIH full-length cDNA project: the Mammalian Gene Collection (MGC).</title>
        <authorList>
            <consortium name="The MGC Project Team"/>
        </authorList>
    </citation>
    <scope>NUCLEOTIDE SEQUENCE [LARGE SCALE MRNA] (ISOFORM 2)</scope>
</reference>
<keyword id="KW-0025">Alternative splicing</keyword>
<keyword id="KW-0339">Growth factor</keyword>
<keyword id="KW-0539">Nucleus</keyword>
<keyword id="KW-1185">Reference proteome</keyword>
<sequence>MAAAIASGLIRQKRQAREQHWDRPSASRRRSSPSKNRGLFNGNLVDIFSKVRIFGLKKRRLRRQDPQLKGIVTRLYCRQGYYLQMHPDGALDGTKDDSTNSTLFNLIPVGLRVVAIQGVKTGLYIAMNGEGYLYPSELFTPECKFKESVFENYYVIYSSMLYRQQESGRAWFLGLNKEGQVMKGNRVKKTKPAAHFLPKPLEVAMYREPSLHDVGETVPKAGVTPSKSTSASAIMNGGKPVNKCKTT</sequence>
<feature type="chain" id="PRO_0000147611" description="Fibroblast growth factor 14">
    <location>
        <begin position="1"/>
        <end position="247"/>
    </location>
</feature>
<feature type="region of interest" description="Disordered" evidence="2">
    <location>
        <begin position="1"/>
        <end position="37"/>
    </location>
</feature>
<feature type="region of interest" description="Disordered" evidence="2">
    <location>
        <begin position="216"/>
        <end position="247"/>
    </location>
</feature>
<feature type="compositionally biased region" description="Basic and acidic residues" evidence="2">
    <location>
        <begin position="15"/>
        <end position="25"/>
    </location>
</feature>
<feature type="splice variant" id="VSP_001530" description="In isoform 2." evidence="3">
    <location>
        <begin position="1"/>
        <end position="84"/>
    </location>
</feature>
<feature type="sequence conflict" description="In Ref. 3; BAC27049." evidence="4" ref="3">
    <original>F</original>
    <variation>C</variation>
    <location>
        <position position="40"/>
    </location>
</feature>